<evidence type="ECO:0000255" key="1">
    <source>
        <dbReference type="HAMAP-Rule" id="MF_01369"/>
    </source>
</evidence>
<evidence type="ECO:0000305" key="2"/>
<comment type="function">
    <text evidence="1">One of the early assembly proteins it binds 23S rRNA. One of the proteins that surrounds the polypeptide exit tunnel on the outside of the ribosome. Forms the main docking site for trigger factor binding to the ribosome.</text>
</comment>
<comment type="subunit">
    <text evidence="1">Part of the 50S ribosomal subunit. Contacts protein L29, and trigger factor when it is bound to the ribosome.</text>
</comment>
<comment type="similarity">
    <text evidence="1">Belongs to the universal ribosomal protein uL23 family.</text>
</comment>
<name>RL23_NOVAD</name>
<accession>Q2G8X8</accession>
<reference key="1">
    <citation type="submission" date="2006-01" db="EMBL/GenBank/DDBJ databases">
        <title>Complete sequence of Novosphingobium aromaticivorans DSM 12444.</title>
        <authorList>
            <consortium name="US DOE Joint Genome Institute"/>
            <person name="Copeland A."/>
            <person name="Lucas S."/>
            <person name="Lapidus A."/>
            <person name="Barry K."/>
            <person name="Detter J.C."/>
            <person name="Glavina T."/>
            <person name="Hammon N."/>
            <person name="Israni S."/>
            <person name="Pitluck S."/>
            <person name="Chain P."/>
            <person name="Malfatti S."/>
            <person name="Shin M."/>
            <person name="Vergez L."/>
            <person name="Schmutz J."/>
            <person name="Larimer F."/>
            <person name="Land M."/>
            <person name="Kyrpides N."/>
            <person name="Ivanova N."/>
            <person name="Fredrickson J."/>
            <person name="Balkwill D."/>
            <person name="Romine M.F."/>
            <person name="Richardson P."/>
        </authorList>
    </citation>
    <scope>NUCLEOTIDE SEQUENCE [LARGE SCALE GENOMIC DNA]</scope>
    <source>
        <strain>ATCC 700278 / DSM 12444 / CCUG 56034 / CIP 105152 / NBRC 16084 / F199</strain>
    </source>
</reference>
<dbReference type="EMBL" id="CP000248">
    <property type="protein sequence ID" value="ABD25695.1"/>
    <property type="molecule type" value="Genomic_DNA"/>
</dbReference>
<dbReference type="RefSeq" id="WP_011444909.1">
    <property type="nucleotide sequence ID" value="NC_007794.1"/>
</dbReference>
<dbReference type="SMR" id="Q2G8X8"/>
<dbReference type="STRING" id="279238.Saro_1251"/>
<dbReference type="KEGG" id="nar:Saro_1251"/>
<dbReference type="eggNOG" id="COG0089">
    <property type="taxonomic scope" value="Bacteria"/>
</dbReference>
<dbReference type="HOGENOM" id="CLU_037562_3_1_5"/>
<dbReference type="Proteomes" id="UP000009134">
    <property type="component" value="Chromosome"/>
</dbReference>
<dbReference type="GO" id="GO:1990904">
    <property type="term" value="C:ribonucleoprotein complex"/>
    <property type="evidence" value="ECO:0007669"/>
    <property type="project" value="UniProtKB-KW"/>
</dbReference>
<dbReference type="GO" id="GO:0005840">
    <property type="term" value="C:ribosome"/>
    <property type="evidence" value="ECO:0007669"/>
    <property type="project" value="UniProtKB-KW"/>
</dbReference>
<dbReference type="GO" id="GO:0019843">
    <property type="term" value="F:rRNA binding"/>
    <property type="evidence" value="ECO:0007669"/>
    <property type="project" value="UniProtKB-UniRule"/>
</dbReference>
<dbReference type="GO" id="GO:0003735">
    <property type="term" value="F:structural constituent of ribosome"/>
    <property type="evidence" value="ECO:0007669"/>
    <property type="project" value="InterPro"/>
</dbReference>
<dbReference type="GO" id="GO:0006412">
    <property type="term" value="P:translation"/>
    <property type="evidence" value="ECO:0007669"/>
    <property type="project" value="UniProtKB-UniRule"/>
</dbReference>
<dbReference type="FunFam" id="3.30.70.330:FF:000001">
    <property type="entry name" value="50S ribosomal protein L23"/>
    <property type="match status" value="1"/>
</dbReference>
<dbReference type="Gene3D" id="3.30.70.330">
    <property type="match status" value="1"/>
</dbReference>
<dbReference type="HAMAP" id="MF_01369_B">
    <property type="entry name" value="Ribosomal_uL23_B"/>
    <property type="match status" value="1"/>
</dbReference>
<dbReference type="InterPro" id="IPR012677">
    <property type="entry name" value="Nucleotide-bd_a/b_plait_sf"/>
</dbReference>
<dbReference type="InterPro" id="IPR013025">
    <property type="entry name" value="Ribosomal_uL23-like"/>
</dbReference>
<dbReference type="InterPro" id="IPR012678">
    <property type="entry name" value="Ribosomal_uL23/eL15/eS24_sf"/>
</dbReference>
<dbReference type="InterPro" id="IPR001014">
    <property type="entry name" value="Ribosomal_uL23_CS"/>
</dbReference>
<dbReference type="NCBIfam" id="NF004359">
    <property type="entry name" value="PRK05738.1-3"/>
    <property type="match status" value="1"/>
</dbReference>
<dbReference type="NCBIfam" id="NF004360">
    <property type="entry name" value="PRK05738.1-5"/>
    <property type="match status" value="1"/>
</dbReference>
<dbReference type="NCBIfam" id="NF004363">
    <property type="entry name" value="PRK05738.2-4"/>
    <property type="match status" value="1"/>
</dbReference>
<dbReference type="PANTHER" id="PTHR11620">
    <property type="entry name" value="60S RIBOSOMAL PROTEIN L23A"/>
    <property type="match status" value="1"/>
</dbReference>
<dbReference type="Pfam" id="PF00276">
    <property type="entry name" value="Ribosomal_L23"/>
    <property type="match status" value="1"/>
</dbReference>
<dbReference type="SUPFAM" id="SSF54189">
    <property type="entry name" value="Ribosomal proteins S24e, L23 and L15e"/>
    <property type="match status" value="1"/>
</dbReference>
<dbReference type="PROSITE" id="PS00050">
    <property type="entry name" value="RIBOSOMAL_L23"/>
    <property type="match status" value="1"/>
</dbReference>
<organism>
    <name type="scientific">Novosphingobium aromaticivorans (strain ATCC 700278 / DSM 12444 / CCUG 56034 / CIP 105152 / NBRC 16084 / F199)</name>
    <dbReference type="NCBI Taxonomy" id="279238"/>
    <lineage>
        <taxon>Bacteria</taxon>
        <taxon>Pseudomonadati</taxon>
        <taxon>Pseudomonadota</taxon>
        <taxon>Alphaproteobacteria</taxon>
        <taxon>Sphingomonadales</taxon>
        <taxon>Sphingomonadaceae</taxon>
        <taxon>Novosphingobium</taxon>
    </lineage>
</organism>
<proteinExistence type="inferred from homology"/>
<keyword id="KW-1185">Reference proteome</keyword>
<keyword id="KW-0687">Ribonucleoprotein</keyword>
<keyword id="KW-0689">Ribosomal protein</keyword>
<keyword id="KW-0694">RNA-binding</keyword>
<keyword id="KW-0699">rRNA-binding</keyword>
<gene>
    <name evidence="1" type="primary">rplW</name>
    <name type="ordered locus">Saro_1251</name>
</gene>
<protein>
    <recommendedName>
        <fullName evidence="1">Large ribosomal subunit protein uL23</fullName>
    </recommendedName>
    <alternativeName>
        <fullName evidence="2">50S ribosomal protein L23</fullName>
    </alternativeName>
</protein>
<feature type="chain" id="PRO_0000272789" description="Large ribosomal subunit protein uL23">
    <location>
        <begin position="1"/>
        <end position="100"/>
    </location>
</feature>
<sequence>MANAIDTRHYDVIVAPHITEKATLLSENNAVVFKVADKATKPEIKAAVEALFNVKVTKVNTLTQKGKTKRWKGKPYKRTDVKKAVVTLAAGQSIDVTSGI</sequence>